<comment type="similarity">
    <text evidence="1">Belongs to the elongation factor P family.</text>
</comment>
<reference key="1">
    <citation type="journal article" date="2002" name="Nature">
        <title>Comparison of the genomes of two Xanthomonas pathogens with differing host specificities.</title>
        <authorList>
            <person name="da Silva A.C.R."/>
            <person name="Ferro J.A."/>
            <person name="Reinach F.C."/>
            <person name="Farah C.S."/>
            <person name="Furlan L.R."/>
            <person name="Quaggio R.B."/>
            <person name="Monteiro-Vitorello C.B."/>
            <person name="Van Sluys M.A."/>
            <person name="Almeida N.F. Jr."/>
            <person name="Alves L.M.C."/>
            <person name="do Amaral A.M."/>
            <person name="Bertolini M.C."/>
            <person name="Camargo L.E.A."/>
            <person name="Camarotte G."/>
            <person name="Cannavan F."/>
            <person name="Cardozo J."/>
            <person name="Chambergo F."/>
            <person name="Ciapina L.P."/>
            <person name="Cicarelli R.M.B."/>
            <person name="Coutinho L.L."/>
            <person name="Cursino-Santos J.R."/>
            <person name="El-Dorry H."/>
            <person name="Faria J.B."/>
            <person name="Ferreira A.J.S."/>
            <person name="Ferreira R.C.C."/>
            <person name="Ferro M.I.T."/>
            <person name="Formighieri E.F."/>
            <person name="Franco M.C."/>
            <person name="Greggio C.C."/>
            <person name="Gruber A."/>
            <person name="Katsuyama A.M."/>
            <person name="Kishi L.T."/>
            <person name="Leite R.P."/>
            <person name="Lemos E.G.M."/>
            <person name="Lemos M.V.F."/>
            <person name="Locali E.C."/>
            <person name="Machado M.A."/>
            <person name="Madeira A.M.B.N."/>
            <person name="Martinez-Rossi N.M."/>
            <person name="Martins E.C."/>
            <person name="Meidanis J."/>
            <person name="Menck C.F.M."/>
            <person name="Miyaki C.Y."/>
            <person name="Moon D.H."/>
            <person name="Moreira L.M."/>
            <person name="Novo M.T.M."/>
            <person name="Okura V.K."/>
            <person name="Oliveira M.C."/>
            <person name="Oliveira V.R."/>
            <person name="Pereira H.A."/>
            <person name="Rossi A."/>
            <person name="Sena J.A.D."/>
            <person name="Silva C."/>
            <person name="de Souza R.F."/>
            <person name="Spinola L.A.F."/>
            <person name="Takita M.A."/>
            <person name="Tamura R.E."/>
            <person name="Teixeira E.C."/>
            <person name="Tezza R.I.D."/>
            <person name="Trindade dos Santos M."/>
            <person name="Truffi D."/>
            <person name="Tsai S.M."/>
            <person name="White F.F."/>
            <person name="Setubal J.C."/>
            <person name="Kitajima J.P."/>
        </authorList>
    </citation>
    <scope>NUCLEOTIDE SEQUENCE [LARGE SCALE GENOMIC DNA]</scope>
    <source>
        <strain>306</strain>
    </source>
</reference>
<organism>
    <name type="scientific">Xanthomonas axonopodis pv. citri (strain 306)</name>
    <dbReference type="NCBI Taxonomy" id="190486"/>
    <lineage>
        <taxon>Bacteria</taxon>
        <taxon>Pseudomonadati</taxon>
        <taxon>Pseudomonadota</taxon>
        <taxon>Gammaproteobacteria</taxon>
        <taxon>Lysobacterales</taxon>
        <taxon>Lysobacteraceae</taxon>
        <taxon>Xanthomonas</taxon>
    </lineage>
</organism>
<dbReference type="EMBL" id="AE008923">
    <property type="protein sequence ID" value="AAM36711.1"/>
    <property type="molecule type" value="Genomic_DNA"/>
</dbReference>
<dbReference type="SMR" id="Q8PLF1"/>
<dbReference type="KEGG" id="xac:XAC1849"/>
<dbReference type="eggNOG" id="COG0231">
    <property type="taxonomic scope" value="Bacteria"/>
</dbReference>
<dbReference type="HOGENOM" id="CLU_074944_2_0_6"/>
<dbReference type="Proteomes" id="UP000000576">
    <property type="component" value="Chromosome"/>
</dbReference>
<dbReference type="GO" id="GO:0005737">
    <property type="term" value="C:cytoplasm"/>
    <property type="evidence" value="ECO:0007669"/>
    <property type="project" value="InterPro"/>
</dbReference>
<dbReference type="GO" id="GO:0003746">
    <property type="term" value="F:translation elongation factor activity"/>
    <property type="evidence" value="ECO:0007669"/>
    <property type="project" value="UniProtKB-UniRule"/>
</dbReference>
<dbReference type="GO" id="GO:0043043">
    <property type="term" value="P:peptide biosynthetic process"/>
    <property type="evidence" value="ECO:0007669"/>
    <property type="project" value="InterPro"/>
</dbReference>
<dbReference type="CDD" id="cd04470">
    <property type="entry name" value="S1_EF-P_repeat_1"/>
    <property type="match status" value="1"/>
</dbReference>
<dbReference type="CDD" id="cd05794">
    <property type="entry name" value="S1_EF-P_repeat_2"/>
    <property type="match status" value="1"/>
</dbReference>
<dbReference type="FunFam" id="2.40.50.140:FF:000004">
    <property type="entry name" value="Elongation factor P"/>
    <property type="match status" value="1"/>
</dbReference>
<dbReference type="FunFam" id="2.30.30.30:FF:000036">
    <property type="entry name" value="Elongation factor P-like protein"/>
    <property type="match status" value="1"/>
</dbReference>
<dbReference type="FunFam" id="2.40.50.140:FF:000233">
    <property type="entry name" value="Elongation factor P-like protein"/>
    <property type="match status" value="1"/>
</dbReference>
<dbReference type="Gene3D" id="2.30.30.30">
    <property type="match status" value="1"/>
</dbReference>
<dbReference type="Gene3D" id="2.40.50.140">
    <property type="entry name" value="Nucleic acid-binding proteins"/>
    <property type="match status" value="2"/>
</dbReference>
<dbReference type="HAMAP" id="MF_00646">
    <property type="entry name" value="EFP"/>
    <property type="match status" value="1"/>
</dbReference>
<dbReference type="InterPro" id="IPR015365">
    <property type="entry name" value="Elong-fact-P_C"/>
</dbReference>
<dbReference type="InterPro" id="IPR012340">
    <property type="entry name" value="NA-bd_OB-fold"/>
</dbReference>
<dbReference type="InterPro" id="IPR014722">
    <property type="entry name" value="Rib_uL2_dom2"/>
</dbReference>
<dbReference type="InterPro" id="IPR020599">
    <property type="entry name" value="Transl_elong_fac_P/YeiP"/>
</dbReference>
<dbReference type="InterPro" id="IPR013185">
    <property type="entry name" value="Transl_elong_KOW-like"/>
</dbReference>
<dbReference type="InterPro" id="IPR011897">
    <property type="entry name" value="Transl_elong_p-like_YeiP"/>
</dbReference>
<dbReference type="InterPro" id="IPR001059">
    <property type="entry name" value="Transl_elong_P/YeiP_cen"/>
</dbReference>
<dbReference type="InterPro" id="IPR013852">
    <property type="entry name" value="Transl_elong_P/YeiP_CS"/>
</dbReference>
<dbReference type="InterPro" id="IPR008991">
    <property type="entry name" value="Translation_prot_SH3-like_sf"/>
</dbReference>
<dbReference type="NCBIfam" id="NF001810">
    <property type="entry name" value="PRK00529.1"/>
    <property type="match status" value="1"/>
</dbReference>
<dbReference type="NCBIfam" id="NF003392">
    <property type="entry name" value="PRK04542.1"/>
    <property type="match status" value="1"/>
</dbReference>
<dbReference type="NCBIfam" id="TIGR02178">
    <property type="entry name" value="yeiP"/>
    <property type="match status" value="1"/>
</dbReference>
<dbReference type="PANTHER" id="PTHR30053">
    <property type="entry name" value="ELONGATION FACTOR P"/>
    <property type="match status" value="1"/>
</dbReference>
<dbReference type="PANTHER" id="PTHR30053:SF14">
    <property type="entry name" value="TRANSLATION ELONGATION FACTOR KOW-LIKE DOMAIN-CONTAINING PROTEIN"/>
    <property type="match status" value="1"/>
</dbReference>
<dbReference type="Pfam" id="PF01132">
    <property type="entry name" value="EFP"/>
    <property type="match status" value="1"/>
</dbReference>
<dbReference type="Pfam" id="PF08207">
    <property type="entry name" value="EFP_N"/>
    <property type="match status" value="1"/>
</dbReference>
<dbReference type="Pfam" id="PF09285">
    <property type="entry name" value="Elong-fact-P_C"/>
    <property type="match status" value="1"/>
</dbReference>
<dbReference type="PIRSF" id="PIRSF005901">
    <property type="entry name" value="EF-P"/>
    <property type="match status" value="1"/>
</dbReference>
<dbReference type="SMART" id="SM01185">
    <property type="entry name" value="EFP"/>
    <property type="match status" value="1"/>
</dbReference>
<dbReference type="SMART" id="SM00841">
    <property type="entry name" value="Elong-fact-P_C"/>
    <property type="match status" value="1"/>
</dbReference>
<dbReference type="SUPFAM" id="SSF50249">
    <property type="entry name" value="Nucleic acid-binding proteins"/>
    <property type="match status" value="2"/>
</dbReference>
<dbReference type="SUPFAM" id="SSF50104">
    <property type="entry name" value="Translation proteins SH3-like domain"/>
    <property type="match status" value="1"/>
</dbReference>
<dbReference type="PROSITE" id="PS01275">
    <property type="entry name" value="EFP"/>
    <property type="match status" value="1"/>
</dbReference>
<proteinExistence type="inferred from homology"/>
<protein>
    <recommendedName>
        <fullName evidence="1">Elongation factor P-like protein</fullName>
    </recommendedName>
</protein>
<gene>
    <name type="ordered locus">XAC1849</name>
</gene>
<name>EFPL_XANAC</name>
<sequence>MKANDIKKGNVVEYNGGIYQIRDIERSSPQGRGGNVRFRFIMYSVPGGVKTDASFDADDNLPEVELLRRQSTFSYKDGEAFVFMDDEDFTPYTLDADVIGTDAGYITDGLTGIYVQVIDEQPVAVQLPQTVTLEVVETPPELKGGTATKRPKPAKLNTGMEIMVPEYITNGERVLVNTTTGEFAGRAD</sequence>
<evidence type="ECO:0000255" key="1">
    <source>
        <dbReference type="HAMAP-Rule" id="MF_00646"/>
    </source>
</evidence>
<accession>Q8PLF1</accession>
<feature type="chain" id="PRO_0000094393" description="Elongation factor P-like protein">
    <location>
        <begin position="1"/>
        <end position="188"/>
    </location>
</feature>